<comment type="function">
    <text evidence="3">Component of the SWI/SNF complex, an ATP-dependent chromatin remodeling complex, which is required for the positive and negative regulation of gene expression of a large number of genes. It changes chromatin structure by altering DNA-histone contacts within a nucleosome, leading eventually to a change in nucleosome position, thus facilitating or repressing binding of gene-specific transcription factors.</text>
</comment>
<comment type="subunit">
    <text evidence="3">Component of the SWI/SNF global transcription activator complex composed of at least arp9, arp42, snf5, snf22, snf30, snf59, sol1, ssr1, ssr2, ssr3, ssr4 and tfg3.</text>
</comment>
<comment type="subcellular location">
    <subcellularLocation>
        <location evidence="2">Nucleus</location>
    </subcellularLocation>
</comment>
<comment type="similarity">
    <text evidence="4">Belongs to the RSC7/SWP82 family. SWP82 subfamily.</text>
</comment>
<organism>
    <name type="scientific">Schizosaccharomyces pombe (strain 972 / ATCC 24843)</name>
    <name type="common">Fission yeast</name>
    <dbReference type="NCBI Taxonomy" id="284812"/>
    <lineage>
        <taxon>Eukaryota</taxon>
        <taxon>Fungi</taxon>
        <taxon>Dikarya</taxon>
        <taxon>Ascomycota</taxon>
        <taxon>Taphrinomycotina</taxon>
        <taxon>Schizosaccharomycetes</taxon>
        <taxon>Schizosaccharomycetales</taxon>
        <taxon>Schizosaccharomycetaceae</taxon>
        <taxon>Schizosaccharomyces</taxon>
    </lineage>
</organism>
<protein>
    <recommendedName>
        <fullName>SWI/SNF global transcription activator complex subunit snf59</fullName>
    </recommendedName>
</protein>
<evidence type="ECO:0000256" key="1">
    <source>
        <dbReference type="SAM" id="MobiDB-lite"/>
    </source>
</evidence>
<evidence type="ECO:0000269" key="2">
    <source>
    </source>
</evidence>
<evidence type="ECO:0000269" key="3">
    <source>
    </source>
</evidence>
<evidence type="ECO:0000305" key="4"/>
<feature type="chain" id="PRO_0000373987" description="SWI/SNF global transcription activator complex subunit snf59">
    <location>
        <begin position="1"/>
        <end position="515"/>
    </location>
</feature>
<feature type="region of interest" description="Disordered" evidence="1">
    <location>
        <begin position="1"/>
        <end position="226"/>
    </location>
</feature>
<feature type="compositionally biased region" description="Basic and acidic residues" evidence="1">
    <location>
        <begin position="7"/>
        <end position="37"/>
    </location>
</feature>
<feature type="compositionally biased region" description="Basic and acidic residues" evidence="1">
    <location>
        <begin position="50"/>
        <end position="59"/>
    </location>
</feature>
<feature type="compositionally biased region" description="Basic and acidic residues" evidence="1">
    <location>
        <begin position="73"/>
        <end position="85"/>
    </location>
</feature>
<feature type="compositionally biased region" description="Basic and acidic residues" evidence="1">
    <location>
        <begin position="94"/>
        <end position="103"/>
    </location>
</feature>
<feature type="compositionally biased region" description="Basic and acidic residues" evidence="1">
    <location>
        <begin position="116"/>
        <end position="125"/>
    </location>
</feature>
<feature type="compositionally biased region" description="Polar residues" evidence="1">
    <location>
        <begin position="126"/>
        <end position="136"/>
    </location>
</feature>
<feature type="compositionally biased region" description="Basic and acidic residues" evidence="1">
    <location>
        <begin position="140"/>
        <end position="226"/>
    </location>
</feature>
<proteinExistence type="evidence at protein level"/>
<accession>O74792</accession>
<name>SNF59_SCHPO</name>
<keyword id="KW-0010">Activator</keyword>
<keyword id="KW-0156">Chromatin regulator</keyword>
<keyword id="KW-0539">Nucleus</keyword>
<keyword id="KW-1185">Reference proteome</keyword>
<keyword id="KW-0804">Transcription</keyword>
<keyword id="KW-0805">Transcription regulation</keyword>
<reference key="1">
    <citation type="journal article" date="2002" name="Nature">
        <title>The genome sequence of Schizosaccharomyces pombe.</title>
        <authorList>
            <person name="Wood V."/>
            <person name="Gwilliam R."/>
            <person name="Rajandream M.A."/>
            <person name="Lyne M.H."/>
            <person name="Lyne R."/>
            <person name="Stewart A."/>
            <person name="Sgouros J.G."/>
            <person name="Peat N."/>
            <person name="Hayles J."/>
            <person name="Baker S.G."/>
            <person name="Basham D."/>
            <person name="Bowman S."/>
            <person name="Brooks K."/>
            <person name="Brown D."/>
            <person name="Brown S."/>
            <person name="Chillingworth T."/>
            <person name="Churcher C.M."/>
            <person name="Collins M."/>
            <person name="Connor R."/>
            <person name="Cronin A."/>
            <person name="Davis P."/>
            <person name="Feltwell T."/>
            <person name="Fraser A."/>
            <person name="Gentles S."/>
            <person name="Goble A."/>
            <person name="Hamlin N."/>
            <person name="Harris D.E."/>
            <person name="Hidalgo J."/>
            <person name="Hodgson G."/>
            <person name="Holroyd S."/>
            <person name="Hornsby T."/>
            <person name="Howarth S."/>
            <person name="Huckle E.J."/>
            <person name="Hunt S."/>
            <person name="Jagels K."/>
            <person name="James K.D."/>
            <person name="Jones L."/>
            <person name="Jones M."/>
            <person name="Leather S."/>
            <person name="McDonald S."/>
            <person name="McLean J."/>
            <person name="Mooney P."/>
            <person name="Moule S."/>
            <person name="Mungall K.L."/>
            <person name="Murphy L.D."/>
            <person name="Niblett D."/>
            <person name="Odell C."/>
            <person name="Oliver K."/>
            <person name="O'Neil S."/>
            <person name="Pearson D."/>
            <person name="Quail M.A."/>
            <person name="Rabbinowitsch E."/>
            <person name="Rutherford K.M."/>
            <person name="Rutter S."/>
            <person name="Saunders D."/>
            <person name="Seeger K."/>
            <person name="Sharp S."/>
            <person name="Skelton J."/>
            <person name="Simmonds M.N."/>
            <person name="Squares R."/>
            <person name="Squares S."/>
            <person name="Stevens K."/>
            <person name="Taylor K."/>
            <person name="Taylor R.G."/>
            <person name="Tivey A."/>
            <person name="Walsh S.V."/>
            <person name="Warren T."/>
            <person name="Whitehead S."/>
            <person name="Woodward J.R."/>
            <person name="Volckaert G."/>
            <person name="Aert R."/>
            <person name="Robben J."/>
            <person name="Grymonprez B."/>
            <person name="Weltjens I."/>
            <person name="Vanstreels E."/>
            <person name="Rieger M."/>
            <person name="Schaefer M."/>
            <person name="Mueller-Auer S."/>
            <person name="Gabel C."/>
            <person name="Fuchs M."/>
            <person name="Duesterhoeft A."/>
            <person name="Fritzc C."/>
            <person name="Holzer E."/>
            <person name="Moestl D."/>
            <person name="Hilbert H."/>
            <person name="Borzym K."/>
            <person name="Langer I."/>
            <person name="Beck A."/>
            <person name="Lehrach H."/>
            <person name="Reinhardt R."/>
            <person name="Pohl T.M."/>
            <person name="Eger P."/>
            <person name="Zimmermann W."/>
            <person name="Wedler H."/>
            <person name="Wambutt R."/>
            <person name="Purnelle B."/>
            <person name="Goffeau A."/>
            <person name="Cadieu E."/>
            <person name="Dreano S."/>
            <person name="Gloux S."/>
            <person name="Lelaure V."/>
            <person name="Mottier S."/>
            <person name="Galibert F."/>
            <person name="Aves S.J."/>
            <person name="Xiang Z."/>
            <person name="Hunt C."/>
            <person name="Moore K."/>
            <person name="Hurst S.M."/>
            <person name="Lucas M."/>
            <person name="Rochet M."/>
            <person name="Gaillardin C."/>
            <person name="Tallada V.A."/>
            <person name="Garzon A."/>
            <person name="Thode G."/>
            <person name="Daga R.R."/>
            <person name="Cruzado L."/>
            <person name="Jimenez J."/>
            <person name="Sanchez M."/>
            <person name="del Rey F."/>
            <person name="Benito J."/>
            <person name="Dominguez A."/>
            <person name="Revuelta J.L."/>
            <person name="Moreno S."/>
            <person name="Armstrong J."/>
            <person name="Forsburg S.L."/>
            <person name="Cerutti L."/>
            <person name="Lowe T."/>
            <person name="McCombie W.R."/>
            <person name="Paulsen I."/>
            <person name="Potashkin J."/>
            <person name="Shpakovski G.V."/>
            <person name="Ussery D."/>
            <person name="Barrell B.G."/>
            <person name="Nurse P."/>
        </authorList>
    </citation>
    <scope>NUCLEOTIDE SEQUENCE [LARGE SCALE GENOMIC DNA]</scope>
    <source>
        <strain>972 / ATCC 24843</strain>
    </source>
</reference>
<reference key="2">
    <citation type="journal article" date="2006" name="Nat. Biotechnol.">
        <title>ORFeome cloning and global analysis of protein localization in the fission yeast Schizosaccharomyces pombe.</title>
        <authorList>
            <person name="Matsuyama A."/>
            <person name="Arai R."/>
            <person name="Yashiroda Y."/>
            <person name="Shirai A."/>
            <person name="Kamata A."/>
            <person name="Sekido S."/>
            <person name="Kobayashi Y."/>
            <person name="Hashimoto A."/>
            <person name="Hamamoto M."/>
            <person name="Hiraoka Y."/>
            <person name="Horinouchi S."/>
            <person name="Yoshida M."/>
        </authorList>
    </citation>
    <scope>SUBCELLULAR LOCATION [LARGE SCALE ANALYSIS]</scope>
</reference>
<reference key="3">
    <citation type="journal article" date="2008" name="Nat. Struct. Mol. Biol.">
        <title>Fission yeast SWI/SNF and RSC complexes show compositional and functional differences from budding yeast.</title>
        <authorList>
            <person name="Monahan B.J."/>
            <person name="Villen J."/>
            <person name="Marguerat S."/>
            <person name="Baehler J."/>
            <person name="Gygi S.P."/>
            <person name="Winston F."/>
        </authorList>
    </citation>
    <scope>IDENTIFICATION IN THE SWI/SNF COMPLEX</scope>
    <scope>FUNCTION OF THE COMPLEX</scope>
    <scope>IDENTIFICATION BY MASS SPECTROMETRY</scope>
</reference>
<sequence>MEEEDITLEHSDDLNKEESGESNRVNIEEPEHHDNSNKESTNLDDLNMLEEPKYHDNSNKESTNLDDLNMLEEPEHHDNSKKESTNLDDSNMLEEPKHHDNSNKESTNLDDLNMSEEPKHHDSSNKESTNLDNSNMDESENQKNFKIEEPKPSGDFRNEGPKQCDDSKIEKPELHVNSKIEEPIHRIDSEHNEPEYHTESKNEESEHNTKSIREEPIHHVDSKNEEPVYSKIPEKMGDEFSENSLSKSDSAVKQEGNLLIHPNNSLKDTAPSKCKEPPVDEALSKKEISDDIAQITSVTPITEKIEDKDKYISEVIDTYGKLADGFEYRAKTFCLEGRGKVLYMLGTECSRLLGFKDSYFMFHKTPSLRKVLTTQSERDQMVEMGLLASNFRFRQLSIVPARQMFLAFGARILMKGTIDPESHKALIEKNISWADDEYYHMDVMANGSTRSSSVKLELKSMDNQNSPSPFQGKDILTLAQGASFYNSKVMRTRNLRKEARLSYYTKLRGVNRSVS</sequence>
<gene>
    <name type="primary">snf59</name>
    <name type="ORF">SPBC26H8.09c</name>
</gene>
<dbReference type="EMBL" id="CU329671">
    <property type="protein sequence ID" value="CAA21101.1"/>
    <property type="molecule type" value="Genomic_DNA"/>
</dbReference>
<dbReference type="PIR" id="T40021">
    <property type="entry name" value="T40021"/>
</dbReference>
<dbReference type="RefSeq" id="NP_596652.1">
    <property type="nucleotide sequence ID" value="NM_001022574.2"/>
</dbReference>
<dbReference type="BioGRID" id="277002">
    <property type="interactions" value="31"/>
</dbReference>
<dbReference type="ComplexPortal" id="CPX-6362">
    <property type="entry name" value="SWI/SNF chromatin remodelling complex"/>
</dbReference>
<dbReference type="DIP" id="DIP-48382N"/>
<dbReference type="FunCoup" id="O74792">
    <property type="interactions" value="18"/>
</dbReference>
<dbReference type="IntAct" id="O74792">
    <property type="interactions" value="11"/>
</dbReference>
<dbReference type="STRING" id="284812.O74792"/>
<dbReference type="iPTMnet" id="O74792"/>
<dbReference type="PaxDb" id="4896-SPBC26H8.09c.1"/>
<dbReference type="EnsemblFungi" id="SPBC26H8.09c.1">
    <property type="protein sequence ID" value="SPBC26H8.09c.1:pep"/>
    <property type="gene ID" value="SPBC26H8.09c"/>
</dbReference>
<dbReference type="GeneID" id="2540474"/>
<dbReference type="KEGG" id="spo:2540474"/>
<dbReference type="PomBase" id="SPBC26H8.09c">
    <property type="gene designation" value="snf59"/>
</dbReference>
<dbReference type="VEuPathDB" id="FungiDB:SPBC26H8.09c"/>
<dbReference type="HOGENOM" id="CLU_529091_0_0_1"/>
<dbReference type="InParanoid" id="O74792"/>
<dbReference type="OMA" id="PHETTES"/>
<dbReference type="PhylomeDB" id="O74792"/>
<dbReference type="PRO" id="PR:O74792"/>
<dbReference type="Proteomes" id="UP000002485">
    <property type="component" value="Chromosome II"/>
</dbReference>
<dbReference type="GO" id="GO:0000785">
    <property type="term" value="C:chromatin"/>
    <property type="evidence" value="ECO:0000303"/>
    <property type="project" value="ComplexPortal"/>
</dbReference>
<dbReference type="GO" id="GO:0005634">
    <property type="term" value="C:nucleus"/>
    <property type="evidence" value="ECO:0007005"/>
    <property type="project" value="PomBase"/>
</dbReference>
<dbReference type="GO" id="GO:0016514">
    <property type="term" value="C:SWI/SNF complex"/>
    <property type="evidence" value="ECO:0000314"/>
    <property type="project" value="PomBase"/>
</dbReference>
<dbReference type="GO" id="GO:0006338">
    <property type="term" value="P:chromatin remodeling"/>
    <property type="evidence" value="ECO:0000303"/>
    <property type="project" value="ComplexPortal"/>
</dbReference>
<dbReference type="GO" id="GO:0006357">
    <property type="term" value="P:regulation of transcription by RNA polymerase II"/>
    <property type="evidence" value="ECO:0000304"/>
    <property type="project" value="PomBase"/>
</dbReference>
<dbReference type="GO" id="GO:0045815">
    <property type="term" value="P:transcription initiation-coupled chromatin remodeling"/>
    <property type="evidence" value="ECO:0000305"/>
    <property type="project" value="PomBase"/>
</dbReference>
<dbReference type="InterPro" id="IPR053127">
    <property type="entry name" value="Chromatin_remod_comp_subunit"/>
</dbReference>
<dbReference type="InterPro" id="IPR013933">
    <property type="entry name" value="CRC_Rsc7/Swp82"/>
</dbReference>
<dbReference type="PANTHER" id="PTHR37929">
    <property type="entry name" value="GRIP AND COILED-COIL DOMAIN-CONTAINING PROTEIN PFC0235W"/>
    <property type="match status" value="1"/>
</dbReference>
<dbReference type="PANTHER" id="PTHR37929:SF1">
    <property type="entry name" value="SWI_SNF GLOBAL TRANSCRIPTION ACTIVATOR COMPLEX SUBUNIT SNF59"/>
    <property type="match status" value="1"/>
</dbReference>
<dbReference type="Pfam" id="PF08624">
    <property type="entry name" value="CRC_subunit"/>
    <property type="match status" value="1"/>
</dbReference>